<keyword id="KW-0067">ATP-binding</keyword>
<keyword id="KW-0173">Coenzyme A biosynthesis</keyword>
<keyword id="KW-0963">Cytoplasm</keyword>
<keyword id="KW-0460">Magnesium</keyword>
<keyword id="KW-0547">Nucleotide-binding</keyword>
<keyword id="KW-0548">Nucleotidyltransferase</keyword>
<keyword id="KW-0808">Transferase</keyword>
<evidence type="ECO:0000255" key="1">
    <source>
        <dbReference type="HAMAP-Rule" id="MF_00151"/>
    </source>
</evidence>
<reference key="1">
    <citation type="journal article" date="2007" name="J. Bacteriol.">
        <title>The complete genome sequence of the lactic acid bacterial paradigm Lactococcus lactis subsp. cremoris MG1363.</title>
        <authorList>
            <person name="Wegmann U."/>
            <person name="O'Connell-Motherway M."/>
            <person name="Zomer A."/>
            <person name="Buist G."/>
            <person name="Shearman C."/>
            <person name="Canchaya C."/>
            <person name="Ventura M."/>
            <person name="Goesmann A."/>
            <person name="Gasson M.J."/>
            <person name="Kuipers O.P."/>
            <person name="van Sinderen D."/>
            <person name="Kok J."/>
        </authorList>
    </citation>
    <scope>NUCLEOTIDE SEQUENCE [LARGE SCALE GENOMIC DNA]</scope>
    <source>
        <strain>MG1363</strain>
    </source>
</reference>
<protein>
    <recommendedName>
        <fullName evidence="1">Phosphopantetheine adenylyltransferase</fullName>
        <ecNumber evidence="1">2.7.7.3</ecNumber>
    </recommendedName>
    <alternativeName>
        <fullName evidence="1">Dephospho-CoA pyrophosphorylase</fullName>
    </alternativeName>
    <alternativeName>
        <fullName evidence="1">Pantetheine-phosphate adenylyltransferase</fullName>
        <shortName evidence="1">PPAT</shortName>
    </alternativeName>
</protein>
<accession>A2RNW2</accession>
<name>COAD_LACLM</name>
<gene>
    <name evidence="1" type="primary">coaD</name>
    <name type="ordered locus">llmg_2443</name>
</gene>
<dbReference type="EC" id="2.7.7.3" evidence="1"/>
<dbReference type="EMBL" id="AM406671">
    <property type="protein sequence ID" value="CAL99007.1"/>
    <property type="molecule type" value="Genomic_DNA"/>
</dbReference>
<dbReference type="RefSeq" id="WP_011836078.1">
    <property type="nucleotide sequence ID" value="NC_009004.1"/>
</dbReference>
<dbReference type="SMR" id="A2RNW2"/>
<dbReference type="STRING" id="416870.llmg_2443"/>
<dbReference type="KEGG" id="llm:llmg_2443"/>
<dbReference type="eggNOG" id="COG0669">
    <property type="taxonomic scope" value="Bacteria"/>
</dbReference>
<dbReference type="HOGENOM" id="CLU_100149_1_1_9"/>
<dbReference type="OrthoDB" id="9806661at2"/>
<dbReference type="PhylomeDB" id="A2RNW2"/>
<dbReference type="UniPathway" id="UPA00241">
    <property type="reaction ID" value="UER00355"/>
</dbReference>
<dbReference type="Proteomes" id="UP000000364">
    <property type="component" value="Chromosome"/>
</dbReference>
<dbReference type="GO" id="GO:0005737">
    <property type="term" value="C:cytoplasm"/>
    <property type="evidence" value="ECO:0007669"/>
    <property type="project" value="UniProtKB-SubCell"/>
</dbReference>
<dbReference type="GO" id="GO:0005524">
    <property type="term" value="F:ATP binding"/>
    <property type="evidence" value="ECO:0007669"/>
    <property type="project" value="UniProtKB-KW"/>
</dbReference>
<dbReference type="GO" id="GO:0004595">
    <property type="term" value="F:pantetheine-phosphate adenylyltransferase activity"/>
    <property type="evidence" value="ECO:0007669"/>
    <property type="project" value="UniProtKB-UniRule"/>
</dbReference>
<dbReference type="GO" id="GO:0015937">
    <property type="term" value="P:coenzyme A biosynthetic process"/>
    <property type="evidence" value="ECO:0007669"/>
    <property type="project" value="UniProtKB-UniRule"/>
</dbReference>
<dbReference type="CDD" id="cd02163">
    <property type="entry name" value="PPAT"/>
    <property type="match status" value="1"/>
</dbReference>
<dbReference type="Gene3D" id="3.40.50.620">
    <property type="entry name" value="HUPs"/>
    <property type="match status" value="1"/>
</dbReference>
<dbReference type="HAMAP" id="MF_00151">
    <property type="entry name" value="PPAT_bact"/>
    <property type="match status" value="1"/>
</dbReference>
<dbReference type="InterPro" id="IPR004821">
    <property type="entry name" value="Cyt_trans-like"/>
</dbReference>
<dbReference type="InterPro" id="IPR001980">
    <property type="entry name" value="PPAT"/>
</dbReference>
<dbReference type="InterPro" id="IPR014729">
    <property type="entry name" value="Rossmann-like_a/b/a_fold"/>
</dbReference>
<dbReference type="NCBIfam" id="TIGR01510">
    <property type="entry name" value="coaD_prev_kdtB"/>
    <property type="match status" value="1"/>
</dbReference>
<dbReference type="NCBIfam" id="TIGR00125">
    <property type="entry name" value="cyt_tran_rel"/>
    <property type="match status" value="1"/>
</dbReference>
<dbReference type="PANTHER" id="PTHR21342">
    <property type="entry name" value="PHOSPHOPANTETHEINE ADENYLYLTRANSFERASE"/>
    <property type="match status" value="1"/>
</dbReference>
<dbReference type="PANTHER" id="PTHR21342:SF1">
    <property type="entry name" value="PHOSPHOPANTETHEINE ADENYLYLTRANSFERASE"/>
    <property type="match status" value="1"/>
</dbReference>
<dbReference type="Pfam" id="PF01467">
    <property type="entry name" value="CTP_transf_like"/>
    <property type="match status" value="1"/>
</dbReference>
<dbReference type="PRINTS" id="PR01020">
    <property type="entry name" value="LPSBIOSNTHSS"/>
</dbReference>
<dbReference type="SUPFAM" id="SSF52374">
    <property type="entry name" value="Nucleotidylyl transferase"/>
    <property type="match status" value="1"/>
</dbReference>
<comment type="function">
    <text evidence="1">Reversibly transfers an adenylyl group from ATP to 4'-phosphopantetheine, yielding dephospho-CoA (dPCoA) and pyrophosphate.</text>
</comment>
<comment type="catalytic activity">
    <reaction evidence="1">
        <text>(R)-4'-phosphopantetheine + ATP + H(+) = 3'-dephospho-CoA + diphosphate</text>
        <dbReference type="Rhea" id="RHEA:19801"/>
        <dbReference type="ChEBI" id="CHEBI:15378"/>
        <dbReference type="ChEBI" id="CHEBI:30616"/>
        <dbReference type="ChEBI" id="CHEBI:33019"/>
        <dbReference type="ChEBI" id="CHEBI:57328"/>
        <dbReference type="ChEBI" id="CHEBI:61723"/>
        <dbReference type="EC" id="2.7.7.3"/>
    </reaction>
</comment>
<comment type="cofactor">
    <cofactor evidence="1">
        <name>Mg(2+)</name>
        <dbReference type="ChEBI" id="CHEBI:18420"/>
    </cofactor>
</comment>
<comment type="pathway">
    <text evidence="1">Cofactor biosynthesis; coenzyme A biosynthesis; CoA from (R)-pantothenate: step 4/5.</text>
</comment>
<comment type="subunit">
    <text evidence="1">Homohexamer.</text>
</comment>
<comment type="subcellular location">
    <subcellularLocation>
        <location evidence="1">Cytoplasm</location>
    </subcellularLocation>
</comment>
<comment type="similarity">
    <text evidence="1">Belongs to the bacterial CoaD family.</text>
</comment>
<proteinExistence type="inferred from homology"/>
<sequence>MTEKIGLFTGTFDPLTNGHLDIIKRASQHFDQLYVGIFKNDQKNPLFPTDKRVEMLEEALTNLSVNHKVKVIKHERDLTVNIAKKLGVTAMVRSLRNSQDLEYEKNMFYFNLEMTGIETLFFLAKPELEPLNSTRIRELHAFGQDVSAWVPENVSRELRKLDEQKK</sequence>
<feature type="chain" id="PRO_1000011165" description="Phosphopantetheine adenylyltransferase">
    <location>
        <begin position="1"/>
        <end position="166"/>
    </location>
</feature>
<feature type="binding site" evidence="1">
    <location>
        <begin position="11"/>
        <end position="12"/>
    </location>
    <ligand>
        <name>ATP</name>
        <dbReference type="ChEBI" id="CHEBI:30616"/>
    </ligand>
</feature>
<feature type="binding site" evidence="1">
    <location>
        <position position="11"/>
    </location>
    <ligand>
        <name>substrate</name>
    </ligand>
</feature>
<feature type="binding site" evidence="1">
    <location>
        <position position="19"/>
    </location>
    <ligand>
        <name>ATP</name>
        <dbReference type="ChEBI" id="CHEBI:30616"/>
    </ligand>
</feature>
<feature type="binding site" evidence="1">
    <location>
        <position position="43"/>
    </location>
    <ligand>
        <name>substrate</name>
    </ligand>
</feature>
<feature type="binding site" evidence="1">
    <location>
        <position position="79"/>
    </location>
    <ligand>
        <name>substrate</name>
    </ligand>
</feature>
<feature type="binding site" evidence="1">
    <location>
        <position position="93"/>
    </location>
    <ligand>
        <name>substrate</name>
    </ligand>
</feature>
<feature type="binding site" evidence="1">
    <location>
        <position position="104"/>
    </location>
    <ligand>
        <name>ATP</name>
        <dbReference type="ChEBI" id="CHEBI:30616"/>
    </ligand>
</feature>
<feature type="binding site" evidence="1">
    <location>
        <begin position="128"/>
        <end position="134"/>
    </location>
    <ligand>
        <name>ATP</name>
        <dbReference type="ChEBI" id="CHEBI:30616"/>
    </ligand>
</feature>
<feature type="site" description="Transition state stabilizer" evidence="1">
    <location>
        <position position="19"/>
    </location>
</feature>
<organism>
    <name type="scientific">Lactococcus lactis subsp. cremoris (strain MG1363)</name>
    <dbReference type="NCBI Taxonomy" id="416870"/>
    <lineage>
        <taxon>Bacteria</taxon>
        <taxon>Bacillati</taxon>
        <taxon>Bacillota</taxon>
        <taxon>Bacilli</taxon>
        <taxon>Lactobacillales</taxon>
        <taxon>Streptococcaceae</taxon>
        <taxon>Lactococcus</taxon>
        <taxon>Lactococcus cremoris subsp. cremoris</taxon>
    </lineage>
</organism>